<gene>
    <name type="ordered locus">VC_A0026</name>
</gene>
<organism>
    <name type="scientific">Vibrio cholerae serotype O1 (strain ATCC 39315 / El Tor Inaba N16961)</name>
    <dbReference type="NCBI Taxonomy" id="243277"/>
    <lineage>
        <taxon>Bacteria</taxon>
        <taxon>Pseudomonadati</taxon>
        <taxon>Pseudomonadota</taxon>
        <taxon>Gammaproteobacteria</taxon>
        <taxon>Vibrionales</taxon>
        <taxon>Vibrionaceae</taxon>
        <taxon>Vibrio</taxon>
    </lineage>
</organism>
<feature type="signal peptide" evidence="1">
    <location>
        <begin position="1"/>
        <end position="21"/>
    </location>
</feature>
<feature type="chain" id="PRO_0000036307" description="UPF0319 protein VC_A0026">
    <location>
        <begin position="22"/>
        <end position="211"/>
    </location>
</feature>
<evidence type="ECO:0000255" key="1">
    <source>
        <dbReference type="HAMAP-Rule" id="MF_00789"/>
    </source>
</evidence>
<reference key="1">
    <citation type="journal article" date="2000" name="Nature">
        <title>DNA sequence of both chromosomes of the cholera pathogen Vibrio cholerae.</title>
        <authorList>
            <person name="Heidelberg J.F."/>
            <person name="Eisen J.A."/>
            <person name="Nelson W.C."/>
            <person name="Clayton R.A."/>
            <person name="Gwinn M.L."/>
            <person name="Dodson R.J."/>
            <person name="Haft D.H."/>
            <person name="Hickey E.K."/>
            <person name="Peterson J.D."/>
            <person name="Umayam L.A."/>
            <person name="Gill S.R."/>
            <person name="Nelson K.E."/>
            <person name="Read T.D."/>
            <person name="Tettelin H."/>
            <person name="Richardson D.L."/>
            <person name="Ermolaeva M.D."/>
            <person name="Vamathevan J.J."/>
            <person name="Bass S."/>
            <person name="Qin H."/>
            <person name="Dragoi I."/>
            <person name="Sellers P."/>
            <person name="McDonald L.A."/>
            <person name="Utterback T.R."/>
            <person name="Fleischmann R.D."/>
            <person name="Nierman W.C."/>
            <person name="White O."/>
            <person name="Salzberg S.L."/>
            <person name="Smith H.O."/>
            <person name="Colwell R.R."/>
            <person name="Mekalanos J.J."/>
            <person name="Venter J.C."/>
            <person name="Fraser C.M."/>
        </authorList>
    </citation>
    <scope>NUCLEOTIDE SEQUENCE [LARGE SCALE GENOMIC DNA]</scope>
    <source>
        <strain>ATCC 39315 / El Tor Inaba N16961</strain>
    </source>
</reference>
<dbReference type="EMBL" id="AE003853">
    <property type="protein sequence ID" value="AAF95940.1"/>
    <property type="molecule type" value="Genomic_DNA"/>
</dbReference>
<dbReference type="PIR" id="C82510">
    <property type="entry name" value="C82510"/>
</dbReference>
<dbReference type="RefSeq" id="NP_232427.1">
    <property type="nucleotide sequence ID" value="NC_002506.1"/>
</dbReference>
<dbReference type="RefSeq" id="WP_000803889.1">
    <property type="nucleotide sequence ID" value="NZ_LT906615.1"/>
</dbReference>
<dbReference type="STRING" id="243277.VC_A0026"/>
<dbReference type="DNASU" id="2612487"/>
<dbReference type="EnsemblBacteria" id="AAF95940">
    <property type="protein sequence ID" value="AAF95940"/>
    <property type="gene ID" value="VC_A0026"/>
</dbReference>
<dbReference type="KEGG" id="vch:VC_A0026"/>
<dbReference type="PATRIC" id="fig|243277.26.peg.2673"/>
<dbReference type="eggNOG" id="COG3110">
    <property type="taxonomic scope" value="Bacteria"/>
</dbReference>
<dbReference type="HOGENOM" id="CLU_073782_1_0_6"/>
<dbReference type="Proteomes" id="UP000000584">
    <property type="component" value="Chromosome 2"/>
</dbReference>
<dbReference type="HAMAP" id="MF_00789">
    <property type="entry name" value="UPF0319"/>
    <property type="match status" value="1"/>
</dbReference>
<dbReference type="InterPro" id="IPR018635">
    <property type="entry name" value="UPF0319"/>
</dbReference>
<dbReference type="NCBIfam" id="NF003383">
    <property type="entry name" value="PRK04517.1"/>
    <property type="match status" value="1"/>
</dbReference>
<dbReference type="PANTHER" id="PTHR38108">
    <property type="entry name" value="UPF0319 PROTEIN YCCT"/>
    <property type="match status" value="1"/>
</dbReference>
<dbReference type="PANTHER" id="PTHR38108:SF1">
    <property type="entry name" value="UPF0319 PROTEIN YCCT"/>
    <property type="match status" value="1"/>
</dbReference>
<dbReference type="Pfam" id="PF09829">
    <property type="entry name" value="DUF2057"/>
    <property type="match status" value="1"/>
</dbReference>
<sequence length="211" mass="23633">MKPMQRLTCLLALCFAASASAKVTMEIPDTIDLLVVNGSSPKLSGGFFDATKKLELEDGEQQIVFRYSPYFSQGNDRIIIDSEVVIATFDAANQELRFDMPKYRDAPQATKAIKTMQWQLLDQQGKAVELRQDRLIKEGMQIGRNFEFETAEYNKKGGVAALTSSMAVQPIAQQEISNATAMAAAEEMLHFWYNKADAETKARFKAFVNQQ</sequence>
<comment type="similarity">
    <text evidence="1">Belongs to the UPF0319 family.</text>
</comment>
<keyword id="KW-1185">Reference proteome</keyword>
<keyword id="KW-0732">Signal</keyword>
<proteinExistence type="inferred from homology"/>
<accession>Q9KND9</accession>
<name>Y2826_VIBCH</name>
<protein>
    <recommendedName>
        <fullName evidence="1">UPF0319 protein VC_A0026</fullName>
    </recommendedName>
</protein>